<reference key="1">
    <citation type="journal article" date="2009" name="PLoS Genet.">
        <title>Organised genome dynamics in the Escherichia coli species results in highly diverse adaptive paths.</title>
        <authorList>
            <person name="Touchon M."/>
            <person name="Hoede C."/>
            <person name="Tenaillon O."/>
            <person name="Barbe V."/>
            <person name="Baeriswyl S."/>
            <person name="Bidet P."/>
            <person name="Bingen E."/>
            <person name="Bonacorsi S."/>
            <person name="Bouchier C."/>
            <person name="Bouvet O."/>
            <person name="Calteau A."/>
            <person name="Chiapello H."/>
            <person name="Clermont O."/>
            <person name="Cruveiller S."/>
            <person name="Danchin A."/>
            <person name="Diard M."/>
            <person name="Dossat C."/>
            <person name="Karoui M.E."/>
            <person name="Frapy E."/>
            <person name="Garry L."/>
            <person name="Ghigo J.M."/>
            <person name="Gilles A.M."/>
            <person name="Johnson J."/>
            <person name="Le Bouguenec C."/>
            <person name="Lescat M."/>
            <person name="Mangenot S."/>
            <person name="Martinez-Jehanne V."/>
            <person name="Matic I."/>
            <person name="Nassif X."/>
            <person name="Oztas S."/>
            <person name="Petit M.A."/>
            <person name="Pichon C."/>
            <person name="Rouy Z."/>
            <person name="Ruf C.S."/>
            <person name="Schneider D."/>
            <person name="Tourret J."/>
            <person name="Vacherie B."/>
            <person name="Vallenet D."/>
            <person name="Medigue C."/>
            <person name="Rocha E.P.C."/>
            <person name="Denamur E."/>
        </authorList>
    </citation>
    <scope>NUCLEOTIDE SEQUENCE [LARGE SCALE GENOMIC DNA]</scope>
    <source>
        <strain>S88 / ExPEC</strain>
    </source>
</reference>
<comment type="function">
    <text evidence="1">Condensation of UDP-2,3-diacylglucosamine and 2,3-diacylglucosamine-1-phosphate to form lipid A disaccharide, a precursor of lipid A, a phosphorylated glycolipid that anchors the lipopolysaccharide to the outer membrane of the cell.</text>
</comment>
<comment type="catalytic activity">
    <reaction evidence="1">
        <text>2-N,3-O-bis[(3R)-3-hydroxytetradecanoyl]-alpha-D-glucosaminyl 1-phosphate + UDP-2-N,3-O-bis[(3R)-3-hydroxytetradecanoyl]-alpha-D-glucosamine = lipid A disaccharide (E. coli) + UDP + H(+)</text>
        <dbReference type="Rhea" id="RHEA:22668"/>
        <dbReference type="ChEBI" id="CHEBI:15378"/>
        <dbReference type="ChEBI" id="CHEBI:57957"/>
        <dbReference type="ChEBI" id="CHEBI:58223"/>
        <dbReference type="ChEBI" id="CHEBI:58466"/>
        <dbReference type="ChEBI" id="CHEBI:78847"/>
    </reaction>
</comment>
<comment type="catalytic activity">
    <reaction evidence="1">
        <text>a lipid X + a UDP-2-N,3-O-bis[(3R)-3-hydroxyacyl]-alpha-D-glucosamine = a lipid A disaccharide + UDP + H(+)</text>
        <dbReference type="Rhea" id="RHEA:67828"/>
        <dbReference type="ChEBI" id="CHEBI:15378"/>
        <dbReference type="ChEBI" id="CHEBI:58223"/>
        <dbReference type="ChEBI" id="CHEBI:137748"/>
        <dbReference type="ChEBI" id="CHEBI:176338"/>
        <dbReference type="ChEBI" id="CHEBI:176343"/>
        <dbReference type="EC" id="2.4.1.182"/>
    </reaction>
</comment>
<comment type="pathway">
    <text evidence="1">Glycolipid biosynthesis; lipid IV(A) biosynthesis; lipid IV(A) from (3R)-3-hydroxytetradecanoyl-[acyl-carrier-protein] and UDP-N-acetyl-alpha-D-glucosamine: step 5/6.</text>
</comment>
<comment type="similarity">
    <text evidence="1">Belongs to the LpxB family.</text>
</comment>
<keyword id="KW-0328">Glycosyltransferase</keyword>
<keyword id="KW-0441">Lipid A biosynthesis</keyword>
<keyword id="KW-0444">Lipid biosynthesis</keyword>
<keyword id="KW-0443">Lipid metabolism</keyword>
<keyword id="KW-1185">Reference proteome</keyword>
<keyword id="KW-0808">Transferase</keyword>
<organism>
    <name type="scientific">Escherichia coli O45:K1 (strain S88 / ExPEC)</name>
    <dbReference type="NCBI Taxonomy" id="585035"/>
    <lineage>
        <taxon>Bacteria</taxon>
        <taxon>Pseudomonadati</taxon>
        <taxon>Pseudomonadota</taxon>
        <taxon>Gammaproteobacteria</taxon>
        <taxon>Enterobacterales</taxon>
        <taxon>Enterobacteriaceae</taxon>
        <taxon>Escherichia</taxon>
    </lineage>
</organism>
<protein>
    <recommendedName>
        <fullName evidence="1">Lipid-A-disaccharide synthase</fullName>
        <ecNumber evidence="1">2.4.1.182</ecNumber>
    </recommendedName>
</protein>
<name>LPXB_ECO45</name>
<gene>
    <name evidence="1" type="primary">lpxB</name>
    <name type="ordered locus">ECS88_0193</name>
</gene>
<dbReference type="EC" id="2.4.1.182" evidence="1"/>
<dbReference type="EMBL" id="CU928161">
    <property type="protein sequence ID" value="CAR01557.1"/>
    <property type="molecule type" value="Genomic_DNA"/>
</dbReference>
<dbReference type="RefSeq" id="WP_000139678.1">
    <property type="nucleotide sequence ID" value="NC_011742.1"/>
</dbReference>
<dbReference type="SMR" id="B7MBG3"/>
<dbReference type="CAZy" id="GT19">
    <property type="family name" value="Glycosyltransferase Family 19"/>
</dbReference>
<dbReference type="KEGG" id="ecz:ECS88_0193"/>
<dbReference type="HOGENOM" id="CLU_036577_3_0_6"/>
<dbReference type="UniPathway" id="UPA00359">
    <property type="reaction ID" value="UER00481"/>
</dbReference>
<dbReference type="Proteomes" id="UP000000747">
    <property type="component" value="Chromosome"/>
</dbReference>
<dbReference type="GO" id="GO:0016020">
    <property type="term" value="C:membrane"/>
    <property type="evidence" value="ECO:0007669"/>
    <property type="project" value="GOC"/>
</dbReference>
<dbReference type="GO" id="GO:0008915">
    <property type="term" value="F:lipid-A-disaccharide synthase activity"/>
    <property type="evidence" value="ECO:0007669"/>
    <property type="project" value="UniProtKB-UniRule"/>
</dbReference>
<dbReference type="GO" id="GO:0005543">
    <property type="term" value="F:phospholipid binding"/>
    <property type="evidence" value="ECO:0007669"/>
    <property type="project" value="TreeGrafter"/>
</dbReference>
<dbReference type="GO" id="GO:0009245">
    <property type="term" value="P:lipid A biosynthetic process"/>
    <property type="evidence" value="ECO:0007669"/>
    <property type="project" value="UniProtKB-UniRule"/>
</dbReference>
<dbReference type="CDD" id="cd01635">
    <property type="entry name" value="Glycosyltransferase_GTB-type"/>
    <property type="match status" value="1"/>
</dbReference>
<dbReference type="HAMAP" id="MF_00392">
    <property type="entry name" value="LpxB"/>
    <property type="match status" value="1"/>
</dbReference>
<dbReference type="InterPro" id="IPR003835">
    <property type="entry name" value="Glyco_trans_19"/>
</dbReference>
<dbReference type="NCBIfam" id="TIGR00215">
    <property type="entry name" value="lpxB"/>
    <property type="match status" value="1"/>
</dbReference>
<dbReference type="PANTHER" id="PTHR30372">
    <property type="entry name" value="LIPID-A-DISACCHARIDE SYNTHASE"/>
    <property type="match status" value="1"/>
</dbReference>
<dbReference type="PANTHER" id="PTHR30372:SF4">
    <property type="entry name" value="LIPID-A-DISACCHARIDE SYNTHASE, MITOCHONDRIAL-RELATED"/>
    <property type="match status" value="1"/>
</dbReference>
<dbReference type="Pfam" id="PF02684">
    <property type="entry name" value="LpxB"/>
    <property type="match status" value="1"/>
</dbReference>
<dbReference type="SUPFAM" id="SSF53756">
    <property type="entry name" value="UDP-Glycosyltransferase/glycogen phosphorylase"/>
    <property type="match status" value="1"/>
</dbReference>
<evidence type="ECO:0000255" key="1">
    <source>
        <dbReference type="HAMAP-Rule" id="MF_00392"/>
    </source>
</evidence>
<accession>B7MBG3</accession>
<feature type="chain" id="PRO_1000191481" description="Lipid-A-disaccharide synthase">
    <location>
        <begin position="1"/>
        <end position="382"/>
    </location>
</feature>
<proteinExistence type="inferred from homology"/>
<sequence>MTEQRPLTIALVAGETSGDILGAGLIRALKERVPNARFVGVAGPRMQAEGCEAWYEMEELAVMGIVEVLGRLRRLLHIRADLTKRFGELKPDVFVGIDAPDFNITLEGNLKKQGIKTIHYVSPSVWAWRQKRVFKIGRATDLVLAFLPFEKAFYDKYNVPCRFIGHTMADAMPLDPDKNGARDVLGIPYDAHCLALLPGSRGAEVEMLSADFLKTAQLLRQTYPDLEIVVPLVNAKRREQFERIKAAVAPDLSVHLLDGMGREAMVASDAALLASGTAALECMLAKCPMVVGYRMKPFTFWLAKRLVKTDYVSLPNLLAGRELVKELLQEECEPQKLAAALLPLLANGKTSHAMHDTFRELHQQIRCNADEQAAQAVLELAQ</sequence>